<protein>
    <recommendedName>
        <fullName evidence="1">NADH-quinone oxidoreductase subunit K</fullName>
        <ecNumber evidence="1">7.1.1.-</ecNumber>
    </recommendedName>
    <alternativeName>
        <fullName evidence="1">NADH dehydrogenase I subunit K</fullName>
    </alternativeName>
    <alternativeName>
        <fullName evidence="1">NDH-1 subunit K</fullName>
    </alternativeName>
</protein>
<keyword id="KW-0997">Cell inner membrane</keyword>
<keyword id="KW-1003">Cell membrane</keyword>
<keyword id="KW-0472">Membrane</keyword>
<keyword id="KW-0520">NAD</keyword>
<keyword id="KW-0874">Quinone</keyword>
<keyword id="KW-1185">Reference proteome</keyword>
<keyword id="KW-1278">Translocase</keyword>
<keyword id="KW-0812">Transmembrane</keyword>
<keyword id="KW-1133">Transmembrane helix</keyword>
<keyword id="KW-0813">Transport</keyword>
<keyword id="KW-0830">Ubiquinone</keyword>
<organism>
    <name type="scientific">Nitrosococcus oceani (strain ATCC 19707 / BCRC 17464 / JCM 30415 / NCIMB 11848 / C-107)</name>
    <dbReference type="NCBI Taxonomy" id="323261"/>
    <lineage>
        <taxon>Bacteria</taxon>
        <taxon>Pseudomonadati</taxon>
        <taxon>Pseudomonadota</taxon>
        <taxon>Gammaproteobacteria</taxon>
        <taxon>Chromatiales</taxon>
        <taxon>Chromatiaceae</taxon>
        <taxon>Nitrosococcus</taxon>
    </lineage>
</organism>
<proteinExistence type="inferred from homology"/>
<dbReference type="EC" id="7.1.1.-" evidence="1"/>
<dbReference type="EMBL" id="CP000127">
    <property type="protein sequence ID" value="ABA57622.1"/>
    <property type="molecule type" value="Genomic_DNA"/>
</dbReference>
<dbReference type="RefSeq" id="WP_011330564.1">
    <property type="nucleotide sequence ID" value="NC_007484.1"/>
</dbReference>
<dbReference type="SMR" id="Q3JC24"/>
<dbReference type="FunCoup" id="Q3JC24">
    <property type="interactions" value="246"/>
</dbReference>
<dbReference type="STRING" id="323261.Noc_1118"/>
<dbReference type="KEGG" id="noc:Noc_1118"/>
<dbReference type="eggNOG" id="COG0713">
    <property type="taxonomic scope" value="Bacteria"/>
</dbReference>
<dbReference type="HOGENOM" id="CLU_144724_0_1_6"/>
<dbReference type="InParanoid" id="Q3JC24"/>
<dbReference type="Proteomes" id="UP000006838">
    <property type="component" value="Chromosome"/>
</dbReference>
<dbReference type="GO" id="GO:0030964">
    <property type="term" value="C:NADH dehydrogenase complex"/>
    <property type="evidence" value="ECO:0007669"/>
    <property type="project" value="TreeGrafter"/>
</dbReference>
<dbReference type="GO" id="GO:0005886">
    <property type="term" value="C:plasma membrane"/>
    <property type="evidence" value="ECO:0007669"/>
    <property type="project" value="UniProtKB-SubCell"/>
</dbReference>
<dbReference type="GO" id="GO:0050136">
    <property type="term" value="F:NADH:ubiquinone reductase (non-electrogenic) activity"/>
    <property type="evidence" value="ECO:0007669"/>
    <property type="project" value="UniProtKB-UniRule"/>
</dbReference>
<dbReference type="GO" id="GO:0048038">
    <property type="term" value="F:quinone binding"/>
    <property type="evidence" value="ECO:0007669"/>
    <property type="project" value="UniProtKB-KW"/>
</dbReference>
<dbReference type="GO" id="GO:0042773">
    <property type="term" value="P:ATP synthesis coupled electron transport"/>
    <property type="evidence" value="ECO:0007669"/>
    <property type="project" value="InterPro"/>
</dbReference>
<dbReference type="FunFam" id="1.10.287.3510:FF:000001">
    <property type="entry name" value="NADH-quinone oxidoreductase subunit K"/>
    <property type="match status" value="1"/>
</dbReference>
<dbReference type="Gene3D" id="1.10.287.3510">
    <property type="match status" value="1"/>
</dbReference>
<dbReference type="HAMAP" id="MF_01456">
    <property type="entry name" value="NDH1_NuoK"/>
    <property type="match status" value="1"/>
</dbReference>
<dbReference type="InterPro" id="IPR001133">
    <property type="entry name" value="NADH_UbQ_OxRdtase_chain4L/K"/>
</dbReference>
<dbReference type="InterPro" id="IPR039428">
    <property type="entry name" value="NUOK/Mnh_C1-like"/>
</dbReference>
<dbReference type="NCBIfam" id="NF004319">
    <property type="entry name" value="PRK05715.1-1"/>
    <property type="match status" value="1"/>
</dbReference>
<dbReference type="NCBIfam" id="NF004320">
    <property type="entry name" value="PRK05715.1-2"/>
    <property type="match status" value="1"/>
</dbReference>
<dbReference type="PANTHER" id="PTHR11434:SF16">
    <property type="entry name" value="NADH-UBIQUINONE OXIDOREDUCTASE CHAIN 4L"/>
    <property type="match status" value="1"/>
</dbReference>
<dbReference type="PANTHER" id="PTHR11434">
    <property type="entry name" value="NADH-UBIQUINONE OXIDOREDUCTASE SUBUNIT ND4L"/>
    <property type="match status" value="1"/>
</dbReference>
<dbReference type="Pfam" id="PF00420">
    <property type="entry name" value="Oxidored_q2"/>
    <property type="match status" value="1"/>
</dbReference>
<feature type="chain" id="PRO_0000390146" description="NADH-quinone oxidoreductase subunit K">
    <location>
        <begin position="1"/>
        <end position="103"/>
    </location>
</feature>
<feature type="transmembrane region" description="Helical" evidence="1">
    <location>
        <begin position="7"/>
        <end position="27"/>
    </location>
</feature>
<feature type="transmembrane region" description="Helical" evidence="1">
    <location>
        <begin position="31"/>
        <end position="51"/>
    </location>
</feature>
<feature type="transmembrane region" description="Helical" evidence="1">
    <location>
        <begin position="65"/>
        <end position="85"/>
    </location>
</feature>
<comment type="function">
    <text evidence="1">NDH-1 shuttles electrons from NADH, via FMN and iron-sulfur (Fe-S) centers, to quinones in the respiratory chain. The immediate electron acceptor for the enzyme in this species is believed to be ubiquinone. Couples the redox reaction to proton translocation (for every two electrons transferred, four hydrogen ions are translocated across the cytoplasmic membrane), and thus conserves the redox energy in a proton gradient.</text>
</comment>
<comment type="catalytic activity">
    <reaction evidence="1">
        <text>a quinone + NADH + 5 H(+)(in) = a quinol + NAD(+) + 4 H(+)(out)</text>
        <dbReference type="Rhea" id="RHEA:57888"/>
        <dbReference type="ChEBI" id="CHEBI:15378"/>
        <dbReference type="ChEBI" id="CHEBI:24646"/>
        <dbReference type="ChEBI" id="CHEBI:57540"/>
        <dbReference type="ChEBI" id="CHEBI:57945"/>
        <dbReference type="ChEBI" id="CHEBI:132124"/>
    </reaction>
</comment>
<comment type="subunit">
    <text evidence="1">NDH-1 is composed of 14 different subunits. Subunits NuoA, H, J, K, L, M, N constitute the membrane sector of the complex.</text>
</comment>
<comment type="subcellular location">
    <subcellularLocation>
        <location evidence="1">Cell inner membrane</location>
        <topology evidence="1">Multi-pass membrane protein</topology>
    </subcellularLocation>
</comment>
<comment type="similarity">
    <text evidence="1">Belongs to the complex I subunit 4L family.</text>
</comment>
<sequence>MLASIPTEHGLYLAAALFILGLIGVLVRRNLIFMLLSLEIMLNATGLAFIVAGARWGEAEGQIMFMLILTLAAAEAAVALALILLVYRRFGTLDADRLSRMRG</sequence>
<name>NUOK_NITOC</name>
<reference key="1">
    <citation type="journal article" date="2006" name="Appl. Environ. Microbiol.">
        <title>Complete genome sequence of the marine, chemolithoautotrophic, ammonia-oxidizing bacterium Nitrosococcus oceani ATCC 19707.</title>
        <authorList>
            <person name="Klotz M.G."/>
            <person name="Arp D.J."/>
            <person name="Chain P.S.G."/>
            <person name="El-Sheikh A.F."/>
            <person name="Hauser L.J."/>
            <person name="Hommes N.G."/>
            <person name="Larimer F.W."/>
            <person name="Malfatti S.A."/>
            <person name="Norton J.M."/>
            <person name="Poret-Peterson A.T."/>
            <person name="Vergez L.M."/>
            <person name="Ward B.B."/>
        </authorList>
    </citation>
    <scope>NUCLEOTIDE SEQUENCE [LARGE SCALE GENOMIC DNA]</scope>
    <source>
        <strain>ATCC 19707 / BCRC 17464 / JCM 30415 / NCIMB 11848 / C-107</strain>
    </source>
</reference>
<gene>
    <name evidence="1" type="primary">nuoK</name>
    <name type="ordered locus">Noc_1118</name>
</gene>
<accession>Q3JC24</accession>
<evidence type="ECO:0000255" key="1">
    <source>
        <dbReference type="HAMAP-Rule" id="MF_01456"/>
    </source>
</evidence>